<organism>
    <name type="scientific">Mus musculus</name>
    <name type="common">Mouse</name>
    <dbReference type="NCBI Taxonomy" id="10090"/>
    <lineage>
        <taxon>Eukaryota</taxon>
        <taxon>Metazoa</taxon>
        <taxon>Chordata</taxon>
        <taxon>Craniata</taxon>
        <taxon>Vertebrata</taxon>
        <taxon>Euteleostomi</taxon>
        <taxon>Mammalia</taxon>
        <taxon>Eutheria</taxon>
        <taxon>Euarchontoglires</taxon>
        <taxon>Glires</taxon>
        <taxon>Rodentia</taxon>
        <taxon>Myomorpha</taxon>
        <taxon>Muroidea</taxon>
        <taxon>Muridae</taxon>
        <taxon>Murinae</taxon>
        <taxon>Mus</taxon>
        <taxon>Mus</taxon>
    </lineage>
</organism>
<reference key="1">
    <citation type="journal article" date="1994" name="Blood">
        <title>Molecular cloning of two isoforms of the murine homolog of the myeloid CD33 antigen.</title>
        <authorList>
            <person name="Tchilian E.Z."/>
            <person name="Beverley P.C."/>
            <person name="Young B.D."/>
            <person name="Watt S.M."/>
        </authorList>
    </citation>
    <scope>NUCLEOTIDE SEQUENCE [MRNA] (ISOFORMS 33-A AND 33-B)</scope>
    <source>
        <strain>BALB/cJ</strain>
        <tissue>Bone marrow</tissue>
    </source>
</reference>
<reference key="2">
    <citation type="journal article" date="2004" name="Genome Res.">
        <title>The status, quality, and expansion of the NIH full-length cDNA project: the Mammalian Gene Collection (MGC).</title>
        <authorList>
            <consortium name="The MGC Project Team"/>
        </authorList>
    </citation>
    <scope>NUCLEOTIDE SEQUENCE [LARGE SCALE MRNA] (ISOFORM 33-A)</scope>
    <source>
        <tissue>Brain</tissue>
    </source>
</reference>
<reference key="3">
    <citation type="journal article" date="2003" name="Mol. Cell. Biol.">
        <title>CD33/Siglec-3 binding specificity, expression pattern, and consequences of gene deletion in mice.</title>
        <authorList>
            <person name="Brinkman-Van der Linden E.C."/>
            <person name="Angata T."/>
            <person name="Reynolds S.A."/>
            <person name="Powell L.D."/>
            <person name="Hedrick S.M."/>
            <person name="Varki A."/>
        </authorList>
    </citation>
    <scope>FUNCTION</scope>
    <scope>TISSUE SPECIFICITY</scope>
    <scope>DISRUPTION PHENOTYPE</scope>
</reference>
<protein>
    <recommendedName>
        <fullName>Myeloid cell surface antigen CD33</fullName>
    </recommendedName>
    <alternativeName>
        <fullName>Sialic acid-binding Ig-like lectin 3</fullName>
        <shortName>Siglec-3</shortName>
    </alternativeName>
    <cdAntigenName>CD33</cdAntigenName>
</protein>
<sequence length="403" mass="44824">MLWPLPLFLLCAGSLAQDLEFQLVAPESVTVEEGLCVHVPCSVFYPSIKLTLGPVTGSWLRKGVSLHEDSPVATSDPRQLVQKATQGRFQLLGDPQKHDCSLFIRDAQKNDTGMYFFRVVREPFVRYSYKKSQLSLHVTSLSRTPDIIIPGTLEAGYPSNLTCSVPWACEQGTPPTFSWMSTALTSLSSRTTDSSVLTFTPQPQDHGTKLTCLVTFSGAGVTVERTIQLNVTRKSGQMRELVLVAVGEATVKLLILGLCLVFLIVMFCRRKTTKLSVHMGCENPIKRQEAITSYNHCLSPTASDAVTPGCSIHRLISRTPRCTAILRIQDPYRRTHLRNRAVSTLRFPWISWEGSLRSTQRSKCTKLCSPVKNLCPLWLPVDNSCIPLIPEWVMLLCVSLTLS</sequence>
<proteinExistence type="evidence at transcript level"/>
<dbReference type="EMBL" id="S71345">
    <property type="protein sequence ID" value="AAB30842.1"/>
    <property type="molecule type" value="mRNA"/>
</dbReference>
<dbReference type="EMBL" id="S71403">
    <property type="protein sequence ID" value="AAB30843.2"/>
    <property type="molecule type" value="mRNA"/>
</dbReference>
<dbReference type="EMBL" id="BC132379">
    <property type="protein sequence ID" value="AAI32380.1"/>
    <property type="molecule type" value="mRNA"/>
</dbReference>
<dbReference type="CCDS" id="CCDS21173.1">
    <molecule id="Q63994-2"/>
</dbReference>
<dbReference type="CCDS" id="CCDS52224.1">
    <molecule id="Q63994-1"/>
</dbReference>
<dbReference type="RefSeq" id="NP_001104528.1">
    <molecule id="Q63994-1"/>
    <property type="nucleotide sequence ID" value="NM_001111058.1"/>
</dbReference>
<dbReference type="RefSeq" id="NP_067268.1">
    <molecule id="Q63994-2"/>
    <property type="nucleotide sequence ID" value="NM_021293.3"/>
</dbReference>
<dbReference type="SMR" id="Q63994"/>
<dbReference type="FunCoup" id="Q63994">
    <property type="interactions" value="233"/>
</dbReference>
<dbReference type="IntAct" id="Q63994">
    <property type="interactions" value="5"/>
</dbReference>
<dbReference type="STRING" id="10090.ENSMUSP00000004728"/>
<dbReference type="GlyCosmos" id="Q63994">
    <property type="glycosylation" value="3 sites, No reported glycans"/>
</dbReference>
<dbReference type="GlyGen" id="Q63994">
    <property type="glycosylation" value="4 sites"/>
</dbReference>
<dbReference type="iPTMnet" id="Q63994"/>
<dbReference type="PhosphoSitePlus" id="Q63994"/>
<dbReference type="PaxDb" id="10090-ENSMUSP00000004728"/>
<dbReference type="PeptideAtlas" id="Q63994"/>
<dbReference type="ProteomicsDB" id="265623">
    <molecule id="Q63994-1"/>
</dbReference>
<dbReference type="ProteomicsDB" id="265624">
    <molecule id="Q63994-2"/>
</dbReference>
<dbReference type="DNASU" id="12489"/>
<dbReference type="Ensembl" id="ENSMUST00000004728.12">
    <molecule id="Q63994-1"/>
    <property type="protein sequence ID" value="ENSMUSP00000004728.6"/>
    <property type="gene ID" value="ENSMUSG00000004609.12"/>
</dbReference>
<dbReference type="Ensembl" id="ENSMUST00000039861.7">
    <molecule id="Q63994-2"/>
    <property type="protein sequence ID" value="ENSMUSP00000045458.6"/>
    <property type="gene ID" value="ENSMUSG00000004609.12"/>
</dbReference>
<dbReference type="Ensembl" id="ENSMUST00000205503.2">
    <molecule id="Q63994-2"/>
    <property type="protein sequence ID" value="ENSMUSP00000146225.2"/>
    <property type="gene ID" value="ENSMUSG00000004609.12"/>
</dbReference>
<dbReference type="GeneID" id="12489"/>
<dbReference type="KEGG" id="mmu:12489"/>
<dbReference type="UCSC" id="uc009gmz.2">
    <molecule id="Q63994-2"/>
    <property type="organism name" value="mouse"/>
</dbReference>
<dbReference type="UCSC" id="uc009gna.1">
    <molecule id="Q63994-1"/>
    <property type="organism name" value="mouse"/>
</dbReference>
<dbReference type="AGR" id="MGI:99440"/>
<dbReference type="CTD" id="945"/>
<dbReference type="MGI" id="MGI:99440">
    <property type="gene designation" value="Cd33"/>
</dbReference>
<dbReference type="VEuPathDB" id="HostDB:ENSMUSG00000004609"/>
<dbReference type="eggNOG" id="ENOG502S41V">
    <property type="taxonomic scope" value="Eukaryota"/>
</dbReference>
<dbReference type="GeneTree" id="ENSGT01080000257333"/>
<dbReference type="HOGENOM" id="CLU_024444_0_1_1"/>
<dbReference type="InParanoid" id="Q63994"/>
<dbReference type="OMA" id="TQHIVWY"/>
<dbReference type="OrthoDB" id="5843397at2759"/>
<dbReference type="PhylomeDB" id="Q63994"/>
<dbReference type="TreeFam" id="TF332441"/>
<dbReference type="Reactome" id="R-MMU-198933">
    <property type="pathway name" value="Immunoregulatory interactions between a Lymphoid and a non-Lymphoid cell"/>
</dbReference>
<dbReference type="Reactome" id="R-MMU-6798695">
    <property type="pathway name" value="Neutrophil degranulation"/>
</dbReference>
<dbReference type="BioGRID-ORCS" id="12489">
    <property type="hits" value="2 hits in 77 CRISPR screens"/>
</dbReference>
<dbReference type="ChiTaRS" id="Cd33">
    <property type="organism name" value="mouse"/>
</dbReference>
<dbReference type="PRO" id="PR:Q63994"/>
<dbReference type="Proteomes" id="UP000000589">
    <property type="component" value="Chromosome 7"/>
</dbReference>
<dbReference type="RNAct" id="Q63994">
    <property type="molecule type" value="protein"/>
</dbReference>
<dbReference type="Bgee" id="ENSMUSG00000004609">
    <property type="expression patterns" value="Expressed in granulocyte and 82 other cell types or tissues"/>
</dbReference>
<dbReference type="ExpressionAtlas" id="Q63994">
    <property type="expression patterns" value="baseline and differential"/>
</dbReference>
<dbReference type="GO" id="GO:0009897">
    <property type="term" value="C:external side of plasma membrane"/>
    <property type="evidence" value="ECO:0000266"/>
    <property type="project" value="MGI"/>
</dbReference>
<dbReference type="GO" id="GO:0030246">
    <property type="term" value="F:carbohydrate binding"/>
    <property type="evidence" value="ECO:0007669"/>
    <property type="project" value="UniProtKB-KW"/>
</dbReference>
<dbReference type="GO" id="GO:0007155">
    <property type="term" value="P:cell adhesion"/>
    <property type="evidence" value="ECO:0007669"/>
    <property type="project" value="UniProtKB-KW"/>
</dbReference>
<dbReference type="FunFam" id="2.60.40.10:FF:000912">
    <property type="entry name" value="Myeloid cell surface antigen CD33"/>
    <property type="match status" value="1"/>
</dbReference>
<dbReference type="FunFam" id="2.60.40.10:FF:000829">
    <property type="entry name" value="Sialic acid-binding Ig-like lectin 8"/>
    <property type="match status" value="1"/>
</dbReference>
<dbReference type="Gene3D" id="2.60.40.10">
    <property type="entry name" value="Immunoglobulins"/>
    <property type="match status" value="2"/>
</dbReference>
<dbReference type="InterPro" id="IPR007110">
    <property type="entry name" value="Ig-like_dom"/>
</dbReference>
<dbReference type="InterPro" id="IPR036179">
    <property type="entry name" value="Ig-like_dom_sf"/>
</dbReference>
<dbReference type="InterPro" id="IPR013783">
    <property type="entry name" value="Ig-like_fold"/>
</dbReference>
<dbReference type="InterPro" id="IPR003599">
    <property type="entry name" value="Ig_sub"/>
</dbReference>
<dbReference type="InterPro" id="IPR013106">
    <property type="entry name" value="Ig_V-set"/>
</dbReference>
<dbReference type="InterPro" id="IPR013151">
    <property type="entry name" value="Immunoglobulin_dom"/>
</dbReference>
<dbReference type="InterPro" id="IPR051036">
    <property type="entry name" value="SIGLEC"/>
</dbReference>
<dbReference type="PANTHER" id="PTHR12035:SF136">
    <property type="entry name" value="MYELOID CELL SURFACE ANTIGEN CD33"/>
    <property type="match status" value="1"/>
</dbReference>
<dbReference type="PANTHER" id="PTHR12035">
    <property type="entry name" value="SIALIC ACID BINDING IMMUNOGLOBULIN-LIKE LECTIN"/>
    <property type="match status" value="1"/>
</dbReference>
<dbReference type="Pfam" id="PF00047">
    <property type="entry name" value="ig"/>
    <property type="match status" value="1"/>
</dbReference>
<dbReference type="Pfam" id="PF07686">
    <property type="entry name" value="V-set"/>
    <property type="match status" value="1"/>
</dbReference>
<dbReference type="SMART" id="SM00409">
    <property type="entry name" value="IG"/>
    <property type="match status" value="2"/>
</dbReference>
<dbReference type="SUPFAM" id="SSF48726">
    <property type="entry name" value="Immunoglobulin"/>
    <property type="match status" value="2"/>
</dbReference>
<dbReference type="PROSITE" id="PS50835">
    <property type="entry name" value="IG_LIKE"/>
    <property type="match status" value="1"/>
</dbReference>
<keyword id="KW-0025">Alternative splicing</keyword>
<keyword id="KW-0130">Cell adhesion</keyword>
<keyword id="KW-1003">Cell membrane</keyword>
<keyword id="KW-1015">Disulfide bond</keyword>
<keyword id="KW-0325">Glycoprotein</keyword>
<keyword id="KW-0393">Immunoglobulin domain</keyword>
<keyword id="KW-0430">Lectin</keyword>
<keyword id="KW-0472">Membrane</keyword>
<keyword id="KW-1185">Reference proteome</keyword>
<keyword id="KW-0732">Signal</keyword>
<keyword id="KW-0812">Transmembrane</keyword>
<keyword id="KW-1133">Transmembrane helix</keyword>
<accession>Q63994</accession>
<accession>A2RT59</accession>
<accession>Q63997</accession>
<comment type="function">
    <text evidence="2 5">Sialic-acid-binding immunoglobulin-like lectin (Siglec) that plays a role in mediating cell-cell interactions and in maintaining immune cells in a resting state (By similarity). Preferentially binds sialic acid to the short O-linked glycans of certain mucins (PubMed:12773563).</text>
</comment>
<comment type="subunit">
    <text evidence="2">Homodimer; disulfide-linked. Interacts with PTPN6/SHP-1 and PTPN11/SHP-2 upon phosphorylation. Interacts with C1QA (via C-terminus); this interaction activates CD33 inhibitory motifs.</text>
</comment>
<comment type="subcellular location">
    <subcellularLocation>
        <location evidence="2">Cell membrane</location>
        <topology evidence="2">Single-pass type I membrane protein</topology>
    </subcellularLocation>
</comment>
<comment type="alternative products">
    <event type="alternative splicing"/>
    <isoform>
        <id>Q63994-1</id>
        <name>33-B</name>
        <sequence type="displayed"/>
    </isoform>
    <isoform>
        <id>Q63994-2</id>
        <name>33-A</name>
        <sequence type="described" ref="VSP_002534"/>
    </isoform>
</comment>
<comment type="tissue specificity">
    <text evidence="5">Expressed on myeloid precursors in the bone marrow. In the peripheral blood, mostly expressed on granulocytes.</text>
</comment>
<comment type="PTM">
    <text evidence="2">Glycosylated.</text>
</comment>
<comment type="PTM">
    <text evidence="2">Phosphorylation is involved in binding to PTPN6 and PTPN11.</text>
</comment>
<comment type="disruption phenotype">
    <text evidence="5">CD33-deficient mice are viable and fertile in a pathogen-free environment without any obvious deficiency in overall organ development and growth.</text>
</comment>
<comment type="similarity">
    <text evidence="8">Belongs to the immunoglobulin superfamily. SIGLEC (sialic acid binding Ig-like lectin) family.</text>
</comment>
<comment type="online information" name="Functional Glycomics Gateway - Glycan Binding">
    <link uri="http://www.functionalglycomics.org/glycomics/GBPServlet?&amp;operationType=view&amp;cbpId=cbp_mou_Itlect_195"/>
    <text>Siglec-3</text>
</comment>
<feature type="signal peptide" evidence="3">
    <location>
        <begin position="1"/>
        <end position="16"/>
    </location>
</feature>
<feature type="chain" id="PRO_0000014879" description="Myeloid cell surface antigen CD33">
    <location>
        <begin position="17"/>
        <end position="403"/>
    </location>
</feature>
<feature type="topological domain" description="Extracellular" evidence="3">
    <location>
        <begin position="18"/>
        <end position="240"/>
    </location>
</feature>
<feature type="transmembrane region" description="Helical" evidence="3">
    <location>
        <begin position="241"/>
        <end position="267"/>
    </location>
</feature>
<feature type="topological domain" description="Cytoplasmic" evidence="3">
    <location>
        <begin position="268"/>
        <end position="403"/>
    </location>
</feature>
<feature type="domain" description="Ig-like V-type">
    <location>
        <begin position="17"/>
        <end position="120"/>
    </location>
</feature>
<feature type="domain" description="Ig-like C2-type">
    <location>
        <begin position="145"/>
        <end position="228"/>
    </location>
</feature>
<feature type="binding site" evidence="1">
    <location>
        <position position="118"/>
    </location>
    <ligand>
        <name>N-acetylneuraminate</name>
        <dbReference type="ChEBI" id="CHEBI:35418"/>
    </ligand>
</feature>
<feature type="glycosylation site" description="N-linked (GlcNAc...) asparagine" evidence="3">
    <location>
        <position position="110"/>
    </location>
</feature>
<feature type="glycosylation site" description="N-linked (GlcNAc...) asparagine" evidence="3">
    <location>
        <position position="160"/>
    </location>
</feature>
<feature type="glycosylation site" description="N-linked (GlcNAc...) asparagine" evidence="3">
    <location>
        <position position="230"/>
    </location>
</feature>
<feature type="disulfide bond" evidence="4">
    <location>
        <begin position="36"/>
        <end position="169"/>
    </location>
</feature>
<feature type="disulfide bond" evidence="4">
    <location>
        <begin position="41"/>
        <end position="100"/>
    </location>
</feature>
<feature type="disulfide bond" evidence="4">
    <location>
        <begin position="163"/>
        <end position="212"/>
    </location>
</feature>
<feature type="splice variant" id="VSP_002534" description="In isoform 33-A." evidence="6 7">
    <original>RQEAITSYNHCLSPTASDAVTPGCSIHRLISRTPRCTAILRIQDPYRRTHLRNRAVSTLRFPWISWEGSLRSTQRSKCTKLCSPVKNLCPLWLPVDNSCIPLIPEWVMLLCVSLTLS</original>
    <variation>AHQQDSKVHSNPENPRPLQKDSPQEQSSVHTKISLDFMGGKPQEYSEI</variation>
    <location>
        <begin position="287"/>
        <end position="403"/>
    </location>
</feature>
<evidence type="ECO:0000250" key="1"/>
<evidence type="ECO:0000250" key="2">
    <source>
        <dbReference type="UniProtKB" id="P20138"/>
    </source>
</evidence>
<evidence type="ECO:0000255" key="3"/>
<evidence type="ECO:0000255" key="4">
    <source>
        <dbReference type="PROSITE-ProRule" id="PRU00114"/>
    </source>
</evidence>
<evidence type="ECO:0000269" key="5">
    <source>
    </source>
</evidence>
<evidence type="ECO:0000303" key="6">
    <source>
    </source>
</evidence>
<evidence type="ECO:0000303" key="7">
    <source>
    </source>
</evidence>
<evidence type="ECO:0000305" key="8"/>
<name>CD33_MOUSE</name>
<gene>
    <name type="primary">Cd33</name>
    <name type="synonym">Siglec3</name>
</gene>